<proteinExistence type="inferred from homology"/>
<sequence length="268" mass="28662">MERYESLFAQLKERKEGAFVPFVTLGDPGIEQSLKIIDTLIEAGADALELGIPFSDPLADGPTIQNATLRAFAAGVTPAQCIEMLALIRQKHPTIPIGLLMYANLVFNKGIDEFYAQCEKVGVDSVLVADVPVEESAPFRQAALRHNVAPIFICPPNADDDLLRQIASYGRGYTYLLSRAGVTGAENRAALPLNHLVAKLKEYNAAPPLQGFGISAPDQVKAAIDAGAAGAISGSAIVKIIEQHINEPEKMLAALKAFVQPMKAATRS</sequence>
<accession>Q32GT0</accession>
<feature type="chain" id="PRO_1000018281" description="Tryptophan synthase alpha chain">
    <location>
        <begin position="1"/>
        <end position="268"/>
    </location>
</feature>
<feature type="active site" description="Proton acceptor" evidence="1">
    <location>
        <position position="49"/>
    </location>
</feature>
<feature type="active site" description="Proton acceptor" evidence="1">
    <location>
        <position position="60"/>
    </location>
</feature>
<gene>
    <name evidence="1" type="primary">trpA</name>
    <name type="ordered locus">SDY_1328</name>
</gene>
<protein>
    <recommendedName>
        <fullName evidence="1">Tryptophan synthase alpha chain</fullName>
        <ecNumber evidence="1">4.2.1.20</ecNumber>
    </recommendedName>
</protein>
<reference key="1">
    <citation type="journal article" date="2005" name="Nucleic Acids Res.">
        <title>Genome dynamics and diversity of Shigella species, the etiologic agents of bacillary dysentery.</title>
        <authorList>
            <person name="Yang F."/>
            <person name="Yang J."/>
            <person name="Zhang X."/>
            <person name="Chen L."/>
            <person name="Jiang Y."/>
            <person name="Yan Y."/>
            <person name="Tang X."/>
            <person name="Wang J."/>
            <person name="Xiong Z."/>
            <person name="Dong J."/>
            <person name="Xue Y."/>
            <person name="Zhu Y."/>
            <person name="Xu X."/>
            <person name="Sun L."/>
            <person name="Chen S."/>
            <person name="Nie H."/>
            <person name="Peng J."/>
            <person name="Xu J."/>
            <person name="Wang Y."/>
            <person name="Yuan Z."/>
            <person name="Wen Y."/>
            <person name="Yao Z."/>
            <person name="Shen Y."/>
            <person name="Qiang B."/>
            <person name="Hou Y."/>
            <person name="Yu J."/>
            <person name="Jin Q."/>
        </authorList>
    </citation>
    <scope>NUCLEOTIDE SEQUENCE [LARGE SCALE GENOMIC DNA]</scope>
    <source>
        <strain>Sd197</strain>
    </source>
</reference>
<comment type="function">
    <text evidence="1">The alpha subunit is responsible for the aldol cleavage of indoleglycerol phosphate to indole and glyceraldehyde 3-phosphate.</text>
</comment>
<comment type="catalytic activity">
    <reaction evidence="1">
        <text>(1S,2R)-1-C-(indol-3-yl)glycerol 3-phosphate + L-serine = D-glyceraldehyde 3-phosphate + L-tryptophan + H2O</text>
        <dbReference type="Rhea" id="RHEA:10532"/>
        <dbReference type="ChEBI" id="CHEBI:15377"/>
        <dbReference type="ChEBI" id="CHEBI:33384"/>
        <dbReference type="ChEBI" id="CHEBI:57912"/>
        <dbReference type="ChEBI" id="CHEBI:58866"/>
        <dbReference type="ChEBI" id="CHEBI:59776"/>
        <dbReference type="EC" id="4.2.1.20"/>
    </reaction>
</comment>
<comment type="pathway">
    <text evidence="1">Amino-acid biosynthesis; L-tryptophan biosynthesis; L-tryptophan from chorismate: step 5/5.</text>
</comment>
<comment type="subunit">
    <text evidence="1">Tetramer of two alpha and two beta chains.</text>
</comment>
<comment type="similarity">
    <text evidence="1">Belongs to the TrpA family.</text>
</comment>
<name>TRPA_SHIDS</name>
<dbReference type="EC" id="4.2.1.20" evidence="1"/>
<dbReference type="EMBL" id="CP000034">
    <property type="protein sequence ID" value="ABB61475.1"/>
    <property type="molecule type" value="Genomic_DNA"/>
</dbReference>
<dbReference type="RefSeq" id="WP_000443088.1">
    <property type="nucleotide sequence ID" value="NC_007606.1"/>
</dbReference>
<dbReference type="RefSeq" id="YP_402966.1">
    <property type="nucleotide sequence ID" value="NC_007606.1"/>
</dbReference>
<dbReference type="SMR" id="Q32GT0"/>
<dbReference type="STRING" id="300267.SDY_1328"/>
<dbReference type="EnsemblBacteria" id="ABB61475">
    <property type="protein sequence ID" value="ABB61475"/>
    <property type="gene ID" value="SDY_1328"/>
</dbReference>
<dbReference type="KEGG" id="sdy:SDY_1328"/>
<dbReference type="PATRIC" id="fig|300267.13.peg.1578"/>
<dbReference type="HOGENOM" id="CLU_016734_0_4_6"/>
<dbReference type="UniPathway" id="UPA00035">
    <property type="reaction ID" value="UER00044"/>
</dbReference>
<dbReference type="Proteomes" id="UP000002716">
    <property type="component" value="Chromosome"/>
</dbReference>
<dbReference type="GO" id="GO:0005829">
    <property type="term" value="C:cytosol"/>
    <property type="evidence" value="ECO:0007669"/>
    <property type="project" value="TreeGrafter"/>
</dbReference>
<dbReference type="GO" id="GO:0004834">
    <property type="term" value="F:tryptophan synthase activity"/>
    <property type="evidence" value="ECO:0007669"/>
    <property type="project" value="UniProtKB-UniRule"/>
</dbReference>
<dbReference type="CDD" id="cd04724">
    <property type="entry name" value="Tryptophan_synthase_alpha"/>
    <property type="match status" value="1"/>
</dbReference>
<dbReference type="FunFam" id="3.20.20.70:FF:000037">
    <property type="entry name" value="Tryptophan synthase alpha chain"/>
    <property type="match status" value="1"/>
</dbReference>
<dbReference type="Gene3D" id="3.20.20.70">
    <property type="entry name" value="Aldolase class I"/>
    <property type="match status" value="1"/>
</dbReference>
<dbReference type="HAMAP" id="MF_00131">
    <property type="entry name" value="Trp_synth_alpha"/>
    <property type="match status" value="1"/>
</dbReference>
<dbReference type="InterPro" id="IPR013785">
    <property type="entry name" value="Aldolase_TIM"/>
</dbReference>
<dbReference type="InterPro" id="IPR011060">
    <property type="entry name" value="RibuloseP-bd_barrel"/>
</dbReference>
<dbReference type="InterPro" id="IPR018204">
    <property type="entry name" value="Trp_synthase_alpha_AS"/>
</dbReference>
<dbReference type="InterPro" id="IPR002028">
    <property type="entry name" value="Trp_synthase_suA"/>
</dbReference>
<dbReference type="NCBIfam" id="TIGR00262">
    <property type="entry name" value="trpA"/>
    <property type="match status" value="1"/>
</dbReference>
<dbReference type="PANTHER" id="PTHR43406:SF1">
    <property type="entry name" value="TRYPTOPHAN SYNTHASE ALPHA CHAIN, CHLOROPLASTIC"/>
    <property type="match status" value="1"/>
</dbReference>
<dbReference type="PANTHER" id="PTHR43406">
    <property type="entry name" value="TRYPTOPHAN SYNTHASE, ALPHA CHAIN"/>
    <property type="match status" value="1"/>
</dbReference>
<dbReference type="Pfam" id="PF00290">
    <property type="entry name" value="Trp_syntA"/>
    <property type="match status" value="1"/>
</dbReference>
<dbReference type="SUPFAM" id="SSF51366">
    <property type="entry name" value="Ribulose-phoshate binding barrel"/>
    <property type="match status" value="1"/>
</dbReference>
<dbReference type="PROSITE" id="PS00167">
    <property type="entry name" value="TRP_SYNTHASE_ALPHA"/>
    <property type="match status" value="1"/>
</dbReference>
<keyword id="KW-0028">Amino-acid biosynthesis</keyword>
<keyword id="KW-0057">Aromatic amino acid biosynthesis</keyword>
<keyword id="KW-0456">Lyase</keyword>
<keyword id="KW-1185">Reference proteome</keyword>
<keyword id="KW-0822">Tryptophan biosynthesis</keyword>
<organism>
    <name type="scientific">Shigella dysenteriae serotype 1 (strain Sd197)</name>
    <dbReference type="NCBI Taxonomy" id="300267"/>
    <lineage>
        <taxon>Bacteria</taxon>
        <taxon>Pseudomonadati</taxon>
        <taxon>Pseudomonadota</taxon>
        <taxon>Gammaproteobacteria</taxon>
        <taxon>Enterobacterales</taxon>
        <taxon>Enterobacteriaceae</taxon>
        <taxon>Shigella</taxon>
    </lineage>
</organism>
<evidence type="ECO:0000255" key="1">
    <source>
        <dbReference type="HAMAP-Rule" id="MF_00131"/>
    </source>
</evidence>